<gene>
    <name evidence="7" type="primary">dcsC</name>
    <name type="synonym">dapF</name>
</gene>
<name>DCSC_STRLA</name>
<reference key="1">
    <citation type="journal article" date="2010" name="Antimicrob. Agents Chemother.">
        <title>Molecular cloning and heterologous expression of a biosynthetic gene cluster for the antitubercular agent D-cycloserine produced by Streptomyces lavendulae.</title>
        <authorList>
            <person name="Kumagai T."/>
            <person name="Koyama Y."/>
            <person name="Oda K."/>
            <person name="Noda M."/>
            <person name="Matoba Y."/>
            <person name="Sugiyama M."/>
        </authorList>
    </citation>
    <scope>NUCLEOTIDE SEQUENCE [GENOMIC DNA]</scope>
    <scope>FUNCTION</scope>
    <source>
        <strain>ATCC 11924 / 8197-20</strain>
    </source>
</reference>
<reference key="2">
    <citation type="journal article" date="2012" name="Org. Biomol. Chem.">
        <title>Characterization of DcsC, a PLP-independent racemase involved in the biosynthesis of D-cycloserine.</title>
        <authorList>
            <person name="Dietrich D."/>
            <person name="van Belkum M.J."/>
            <person name="Vederas J.C."/>
        </authorList>
    </citation>
    <scope>FUNCTION</scope>
    <scope>CATALYTIC ACTIVITY</scope>
    <scope>BIOPHYSICOCHEMICAL PROPERTIES</scope>
    <scope>ACTIVITY REGULATION</scope>
    <scope>REACTION MECHANISM</scope>
    <scope>MASS SPECTROMETRY</scope>
</reference>
<reference key="3">
    <citation type="journal article" date="2013" name="Antimicrob. Agents Chemother.">
        <title>Establishment of an in vitro D-cycloserine-synthesizing system by using O-ureido-L-serine synthase and D-cycloserine synthetase found in the biosynthetic pathway.</title>
        <authorList>
            <person name="Uda N."/>
            <person name="Matoba Y."/>
            <person name="Kumagai T."/>
            <person name="Oda K."/>
            <person name="Noda M."/>
            <person name="Sugiyama M."/>
        </authorList>
    </citation>
    <scope>FUNCTION</scope>
    <scope>CATALYTIC ACTIVITY</scope>
    <scope>SUBUNIT</scope>
    <source>
        <strain>ATCC 11924 / 8197-20</strain>
    </source>
</reference>
<reference key="4">
    <citation type="journal article" date="2015" name="Antimicrob. Agents Chemother.">
        <authorList>
            <person name="Uda N."/>
            <person name="Matoba Y."/>
            <person name="Kumagai T."/>
            <person name="Oda K."/>
            <person name="Noda M."/>
            <person name="Sugiyama M."/>
        </authorList>
    </citation>
    <scope>ERRATUM OF PUBMED:23529730</scope>
</reference>
<evidence type="ECO:0000250" key="1"/>
<evidence type="ECO:0000250" key="2">
    <source>
        <dbReference type="UniProtKB" id="P0A6K1"/>
    </source>
</evidence>
<evidence type="ECO:0000250" key="3">
    <source>
        <dbReference type="UniProtKB" id="P44859"/>
    </source>
</evidence>
<evidence type="ECO:0000269" key="4">
    <source>
    </source>
</evidence>
<evidence type="ECO:0000269" key="5">
    <source>
    </source>
</evidence>
<evidence type="ECO:0000269" key="6">
    <source>
    </source>
</evidence>
<evidence type="ECO:0000303" key="7">
    <source>
    </source>
</evidence>
<evidence type="ECO:0000305" key="8"/>
<evidence type="ECO:0000305" key="9">
    <source>
    </source>
</evidence>
<evidence type="ECO:0007829" key="10">
    <source>
        <dbReference type="PDB" id="7VDY"/>
    </source>
</evidence>
<dbReference type="EC" id="5.1.1.19" evidence="5 6"/>
<dbReference type="EMBL" id="AB516431">
    <property type="protein sequence ID" value="BAI70377.1"/>
    <property type="molecule type" value="Genomic_DNA"/>
</dbReference>
<dbReference type="PDB" id="7VDY">
    <property type="method" value="X-ray"/>
    <property type="resolution" value="2.12 A"/>
    <property type="chains" value="A/B=1-287"/>
</dbReference>
<dbReference type="PDBsum" id="7VDY"/>
<dbReference type="SMR" id="D2Z026"/>
<dbReference type="KEGG" id="ag:BAI70377"/>
<dbReference type="BioCyc" id="MetaCyc:MONOMER-18018"/>
<dbReference type="BRENDA" id="5.1.1.19">
    <property type="organism ID" value="13336"/>
</dbReference>
<dbReference type="GO" id="GO:0005829">
    <property type="term" value="C:cytosol"/>
    <property type="evidence" value="ECO:0007669"/>
    <property type="project" value="TreeGrafter"/>
</dbReference>
<dbReference type="GO" id="GO:0008837">
    <property type="term" value="F:diaminopimelate epimerase activity"/>
    <property type="evidence" value="ECO:0007669"/>
    <property type="project" value="UniProtKB-UniRule"/>
</dbReference>
<dbReference type="GO" id="GO:0016855">
    <property type="term" value="F:racemase and epimerase activity, acting on amino acids and derivatives"/>
    <property type="evidence" value="ECO:0000314"/>
    <property type="project" value="UniProtKB"/>
</dbReference>
<dbReference type="GO" id="GO:0017000">
    <property type="term" value="P:antibiotic biosynthetic process"/>
    <property type="evidence" value="ECO:0007669"/>
    <property type="project" value="UniProtKB-KW"/>
</dbReference>
<dbReference type="GO" id="GO:0009089">
    <property type="term" value="P:lysine biosynthetic process via diaminopimelate"/>
    <property type="evidence" value="ECO:0007669"/>
    <property type="project" value="UniProtKB-UniRule"/>
</dbReference>
<dbReference type="FunFam" id="3.10.310.10:FF:000004">
    <property type="entry name" value="Diaminopimelate epimerase"/>
    <property type="match status" value="1"/>
</dbReference>
<dbReference type="Gene3D" id="3.10.310.10">
    <property type="entry name" value="Diaminopimelate Epimerase, Chain A, domain 1"/>
    <property type="match status" value="2"/>
</dbReference>
<dbReference type="HAMAP" id="MF_00197">
    <property type="entry name" value="DAP_epimerase"/>
    <property type="match status" value="1"/>
</dbReference>
<dbReference type="InterPro" id="IPR001653">
    <property type="entry name" value="DAP_epimerase_DapF"/>
</dbReference>
<dbReference type="NCBIfam" id="TIGR00652">
    <property type="entry name" value="DapF"/>
    <property type="match status" value="1"/>
</dbReference>
<dbReference type="PANTHER" id="PTHR31689:SF0">
    <property type="entry name" value="DIAMINOPIMELATE EPIMERASE"/>
    <property type="match status" value="1"/>
</dbReference>
<dbReference type="PANTHER" id="PTHR31689">
    <property type="entry name" value="DIAMINOPIMELATE EPIMERASE, CHLOROPLASTIC"/>
    <property type="match status" value="1"/>
</dbReference>
<dbReference type="Pfam" id="PF01678">
    <property type="entry name" value="DAP_epimerase"/>
    <property type="match status" value="2"/>
</dbReference>
<dbReference type="SUPFAM" id="SSF54506">
    <property type="entry name" value="Diaminopimelate epimerase-like"/>
    <property type="match status" value="2"/>
</dbReference>
<accession>D2Z026</accession>
<keyword id="KW-0002">3D-structure</keyword>
<keyword id="KW-0045">Antibiotic biosynthesis</keyword>
<keyword id="KW-0963">Cytoplasm</keyword>
<keyword id="KW-0413">Isomerase</keyword>
<sequence>MIRMRTPSTLPFTKMHGAGNDFVVLDLRDGPDPSPELCRALADRHKGVGCDLVLGIREPRSARAVAAFDIWTADGSRSAQCGNGARCVAAWAVRAGLARGPRFALDSPSGTHEVDVLDADTFRVALAVPRFAPESIPLFGHDGEQDLYEADLGDGTRVRFAAVSMGNPHAVIEVDDTATAPVARVGRAVQASGLFLPTVNVGFARVESRDRVHLRVHEYGAGETLACGSGACAAAAVLMRRGRVDRNVSVVLPGGELRISWPDDAADVLMTGPAAFVYEGTFLHASV</sequence>
<proteinExistence type="evidence at protein level"/>
<organism>
    <name type="scientific">Streptomyces lavendulae</name>
    <dbReference type="NCBI Taxonomy" id="1914"/>
    <lineage>
        <taxon>Bacteria</taxon>
        <taxon>Bacillati</taxon>
        <taxon>Actinomycetota</taxon>
        <taxon>Actinomycetes</taxon>
        <taxon>Kitasatosporales</taxon>
        <taxon>Streptomycetaceae</taxon>
        <taxon>Streptomyces</taxon>
    </lineage>
</organism>
<feature type="chain" id="PRO_0000424062" description="O-ureido-serine racemase">
    <location>
        <begin position="1"/>
        <end position="287"/>
    </location>
</feature>
<feature type="active site" description="Proton donor" evidence="3">
    <location>
        <position position="81"/>
    </location>
</feature>
<feature type="active site" description="Proton acceptor" evidence="3">
    <location>
        <position position="227"/>
    </location>
</feature>
<feature type="binding site" evidence="3">
    <location>
        <position position="20"/>
    </location>
    <ligand>
        <name>substrate</name>
    </ligand>
</feature>
<feature type="binding site" evidence="3">
    <location>
        <begin position="82"/>
        <end position="83"/>
    </location>
    <ligand>
        <name>substrate</name>
    </ligand>
</feature>
<feature type="binding site" evidence="3">
    <location>
        <position position="167"/>
    </location>
    <ligand>
        <name>substrate</name>
    </ligand>
</feature>
<feature type="binding site" evidence="3">
    <location>
        <position position="200"/>
    </location>
    <ligand>
        <name>substrate</name>
    </ligand>
</feature>
<feature type="binding site" evidence="3">
    <location>
        <begin position="218"/>
        <end position="219"/>
    </location>
    <ligand>
        <name>substrate</name>
    </ligand>
</feature>
<feature type="binding site" evidence="3">
    <location>
        <begin position="228"/>
        <end position="229"/>
    </location>
    <ligand>
        <name>substrate</name>
    </ligand>
</feature>
<feature type="site" description="Could be important to modulate the pK values of the two catalytic cysteine residues" evidence="3">
    <location>
        <position position="169"/>
    </location>
</feature>
<feature type="site" description="Could be important to modulate the pK values of the two catalytic cysteine residues" evidence="3">
    <location>
        <position position="218"/>
    </location>
</feature>
<feature type="site" description="Important for dimerization" evidence="2">
    <location>
        <position position="278"/>
    </location>
</feature>
<feature type="strand" evidence="10">
    <location>
        <begin position="10"/>
        <end position="17"/>
    </location>
</feature>
<feature type="strand" evidence="10">
    <location>
        <begin position="20"/>
        <end position="26"/>
    </location>
</feature>
<feature type="helix" evidence="10">
    <location>
        <begin position="35"/>
        <end position="42"/>
    </location>
</feature>
<feature type="turn" evidence="10">
    <location>
        <begin position="44"/>
        <end position="46"/>
    </location>
</feature>
<feature type="strand" evidence="10">
    <location>
        <begin position="51"/>
        <end position="57"/>
    </location>
</feature>
<feature type="strand" evidence="10">
    <location>
        <begin position="61"/>
        <end position="63"/>
    </location>
</feature>
<feature type="strand" evidence="10">
    <location>
        <begin position="65"/>
        <end position="72"/>
    </location>
</feature>
<feature type="helix" evidence="10">
    <location>
        <begin position="83"/>
        <end position="94"/>
    </location>
</feature>
<feature type="strand" evidence="10">
    <location>
        <begin position="100"/>
        <end position="107"/>
    </location>
</feature>
<feature type="strand" evidence="10">
    <location>
        <begin position="110"/>
        <end position="118"/>
    </location>
</feature>
<feature type="strand" evidence="10">
    <location>
        <begin position="121"/>
        <end position="125"/>
    </location>
</feature>
<feature type="turn" evidence="10">
    <location>
        <begin position="133"/>
        <end position="137"/>
    </location>
</feature>
<feature type="strand" evidence="10">
    <location>
        <begin position="148"/>
        <end position="151"/>
    </location>
</feature>
<feature type="strand" evidence="10">
    <location>
        <begin position="157"/>
        <end position="173"/>
    </location>
</feature>
<feature type="helix" evidence="10">
    <location>
        <begin position="177"/>
        <end position="179"/>
    </location>
</feature>
<feature type="helix" evidence="10">
    <location>
        <begin position="182"/>
        <end position="191"/>
    </location>
</feature>
<feature type="strand" evidence="10">
    <location>
        <begin position="193"/>
        <end position="195"/>
    </location>
</feature>
<feature type="strand" evidence="10">
    <location>
        <begin position="200"/>
        <end position="208"/>
    </location>
</feature>
<feature type="strand" evidence="10">
    <location>
        <begin position="211"/>
        <end position="218"/>
    </location>
</feature>
<feature type="turn" evidence="10">
    <location>
        <begin position="219"/>
        <end position="221"/>
    </location>
</feature>
<feature type="helix" evidence="10">
    <location>
        <begin position="228"/>
        <end position="240"/>
    </location>
</feature>
<feature type="strand" evidence="10">
    <location>
        <begin position="246"/>
        <end position="251"/>
    </location>
</feature>
<feature type="strand" evidence="10">
    <location>
        <begin position="256"/>
        <end position="260"/>
    </location>
</feature>
<feature type="strand" evidence="10">
    <location>
        <begin position="269"/>
        <end position="273"/>
    </location>
</feature>
<feature type="strand" evidence="10">
    <location>
        <begin position="275"/>
        <end position="284"/>
    </location>
</feature>
<protein>
    <recommendedName>
        <fullName evidence="7">O-ureido-serine racemase</fullName>
        <ecNumber evidence="5 6">5.1.1.19</ecNumber>
    </recommendedName>
</protein>
<comment type="function">
    <text evidence="4 5 6">Involved in the biosynthesis of the antibiotic D-cycloserine (DCS), a cyclic structural analog of D-alanine, used as an antitubercular agent. Catalyzes the stereoinversion of O-ureido-L-serine to O-ureido-D-serine.</text>
</comment>
<comment type="catalytic activity">
    <reaction evidence="5 6">
        <text>O-ureido-L-serine = O-ureido-D-serine</text>
        <dbReference type="Rhea" id="RHEA:36707"/>
        <dbReference type="ChEBI" id="CHEBI:73389"/>
        <dbReference type="ChEBI" id="CHEBI:74158"/>
        <dbReference type="EC" id="5.1.1.19"/>
    </reaction>
</comment>
<comment type="activity regulation">
    <text evidence="5">Inhibited by thiol-inactivating reagents such as iodoacetamide and Hg(2+) ions.</text>
</comment>
<comment type="biophysicochemical properties">
    <kinetics>
        <KM evidence="5">17 mM for O-ureido-D-serine (at 30 degrees Celsius)</KM>
        <KM evidence="5">110 mM for O-ureido-L-serine (at 30 degrees Celsius)</KM>
        <text evidence="5">kcat is 158 sec(-1) and 29 sec(-1) for O-ureido-L-serine and O-ureido-D-serine, respectively (at 30 degrees Celsius).</text>
    </kinetics>
    <phDependence>
        <text evidence="5">Optimum pH is 7.9.</text>
    </phDependence>
</comment>
<comment type="subunit">
    <text evidence="6">Monomer.</text>
</comment>
<comment type="subcellular location">
    <subcellularLocation>
        <location evidence="1">Cytoplasm</location>
    </subcellularLocation>
</comment>
<comment type="mass spectrometry"/>
<comment type="miscellaneous">
    <text evidence="9">It employs a two-base mechanism, with a thiolate-thiol pair in the active site.</text>
</comment>
<comment type="similarity">
    <text evidence="8">Belongs to the diaminopimelate epimerase family.</text>
</comment>